<name>KDPC_BACFN</name>
<sequence>MKTLLKSIKITLVFCVFFSVFYILVLWLFAQVAGPNRGNAEVVTLNGKVVGAANVGQTFTEEKYFWGRPSCAGDGYDATSSAGSNKGPTNPEYLAEVEARIDTFLIHHPYLARKDVPAEMVTASASGLDPDITPQSAYVQVKRVAQARGMNVEEVRRVVDKAVEKPLLGIFGTEKVNVLKLNIALEELKNR</sequence>
<comment type="function">
    <text evidence="1">Part of the high-affinity ATP-driven potassium transport (or Kdp) system, which catalyzes the hydrolysis of ATP coupled with the electrogenic transport of potassium into the cytoplasm. This subunit acts as a catalytic chaperone that increases the ATP-binding affinity of the ATP-hydrolyzing subunit KdpB by the formation of a transient KdpB/KdpC/ATP ternary complex.</text>
</comment>
<comment type="subunit">
    <text evidence="1">The system is composed of three essential subunits: KdpA, KdpB and KdpC.</text>
</comment>
<comment type="subcellular location">
    <subcellularLocation>
        <location evidence="1">Cell inner membrane</location>
        <topology evidence="1">Single-pass membrane protein</topology>
    </subcellularLocation>
</comment>
<comment type="similarity">
    <text evidence="1">Belongs to the KdpC family.</text>
</comment>
<feature type="chain" id="PRO_1000022260" description="Potassium-transporting ATPase KdpC subunit">
    <location>
        <begin position="1"/>
        <end position="191"/>
    </location>
</feature>
<feature type="transmembrane region" description="Helical" evidence="1">
    <location>
        <begin position="10"/>
        <end position="30"/>
    </location>
</feature>
<dbReference type="EMBL" id="CR626927">
    <property type="protein sequence ID" value="CAH06285.1"/>
    <property type="molecule type" value="Genomic_DNA"/>
</dbReference>
<dbReference type="RefSeq" id="WP_010992084.1">
    <property type="nucleotide sequence ID" value="NC_003228.3"/>
</dbReference>
<dbReference type="SMR" id="Q5LHU5"/>
<dbReference type="PaxDb" id="272559-BF9343_0506"/>
<dbReference type="GeneID" id="60369111"/>
<dbReference type="KEGG" id="bfs:BF9343_0506"/>
<dbReference type="eggNOG" id="COG2156">
    <property type="taxonomic scope" value="Bacteria"/>
</dbReference>
<dbReference type="HOGENOM" id="CLU_077094_2_0_10"/>
<dbReference type="Proteomes" id="UP000006731">
    <property type="component" value="Chromosome"/>
</dbReference>
<dbReference type="GO" id="GO:0005886">
    <property type="term" value="C:plasma membrane"/>
    <property type="evidence" value="ECO:0007669"/>
    <property type="project" value="UniProtKB-SubCell"/>
</dbReference>
<dbReference type="GO" id="GO:0005524">
    <property type="term" value="F:ATP binding"/>
    <property type="evidence" value="ECO:0007669"/>
    <property type="project" value="UniProtKB-UniRule"/>
</dbReference>
<dbReference type="GO" id="GO:0008556">
    <property type="term" value="F:P-type potassium transmembrane transporter activity"/>
    <property type="evidence" value="ECO:0007669"/>
    <property type="project" value="InterPro"/>
</dbReference>
<dbReference type="HAMAP" id="MF_00276">
    <property type="entry name" value="KdpC"/>
    <property type="match status" value="1"/>
</dbReference>
<dbReference type="InterPro" id="IPR003820">
    <property type="entry name" value="KdpC"/>
</dbReference>
<dbReference type="NCBIfam" id="TIGR00681">
    <property type="entry name" value="kdpC"/>
    <property type="match status" value="1"/>
</dbReference>
<dbReference type="NCBIfam" id="NF001454">
    <property type="entry name" value="PRK00315.1"/>
    <property type="match status" value="1"/>
</dbReference>
<dbReference type="NCBIfam" id="NF010606">
    <property type="entry name" value="PRK14002.1"/>
    <property type="match status" value="1"/>
</dbReference>
<dbReference type="PANTHER" id="PTHR30042">
    <property type="entry name" value="POTASSIUM-TRANSPORTING ATPASE C CHAIN"/>
    <property type="match status" value="1"/>
</dbReference>
<dbReference type="PANTHER" id="PTHR30042:SF2">
    <property type="entry name" value="POTASSIUM-TRANSPORTING ATPASE KDPC SUBUNIT"/>
    <property type="match status" value="1"/>
</dbReference>
<dbReference type="Pfam" id="PF02669">
    <property type="entry name" value="KdpC"/>
    <property type="match status" value="1"/>
</dbReference>
<dbReference type="PIRSF" id="PIRSF001296">
    <property type="entry name" value="K_ATPase_KdpC"/>
    <property type="match status" value="1"/>
</dbReference>
<proteinExistence type="inferred from homology"/>
<reference key="1">
    <citation type="journal article" date="2005" name="Science">
        <title>Extensive DNA inversions in the B. fragilis genome control variable gene expression.</title>
        <authorList>
            <person name="Cerdeno-Tarraga A.-M."/>
            <person name="Patrick S."/>
            <person name="Crossman L.C."/>
            <person name="Blakely G."/>
            <person name="Abratt V."/>
            <person name="Lennard N."/>
            <person name="Poxton I."/>
            <person name="Duerden B."/>
            <person name="Harris B."/>
            <person name="Quail M.A."/>
            <person name="Barron A."/>
            <person name="Clark L."/>
            <person name="Corton C."/>
            <person name="Doggett J."/>
            <person name="Holden M.T.G."/>
            <person name="Larke N."/>
            <person name="Line A."/>
            <person name="Lord A."/>
            <person name="Norbertczak H."/>
            <person name="Ormond D."/>
            <person name="Price C."/>
            <person name="Rabbinowitsch E."/>
            <person name="Woodward J."/>
            <person name="Barrell B.G."/>
            <person name="Parkhill J."/>
        </authorList>
    </citation>
    <scope>NUCLEOTIDE SEQUENCE [LARGE SCALE GENOMIC DNA]</scope>
    <source>
        <strain>ATCC 25285 / DSM 2151 / CCUG 4856 / JCM 11019 / LMG 10263 / NCTC 9343 / Onslow / VPI 2553 / EN-2</strain>
    </source>
</reference>
<organism>
    <name type="scientific">Bacteroides fragilis (strain ATCC 25285 / DSM 2151 / CCUG 4856 / JCM 11019 / LMG 10263 / NCTC 9343 / Onslow / VPI 2553 / EN-2)</name>
    <dbReference type="NCBI Taxonomy" id="272559"/>
    <lineage>
        <taxon>Bacteria</taxon>
        <taxon>Pseudomonadati</taxon>
        <taxon>Bacteroidota</taxon>
        <taxon>Bacteroidia</taxon>
        <taxon>Bacteroidales</taxon>
        <taxon>Bacteroidaceae</taxon>
        <taxon>Bacteroides</taxon>
    </lineage>
</organism>
<gene>
    <name evidence="1" type="primary">kdpC</name>
    <name type="ordered locus">BF0530</name>
</gene>
<protein>
    <recommendedName>
        <fullName evidence="1">Potassium-transporting ATPase KdpC subunit</fullName>
    </recommendedName>
    <alternativeName>
        <fullName evidence="1">ATP phosphohydrolase [potassium-transporting] C chain</fullName>
    </alternativeName>
    <alternativeName>
        <fullName evidence="1">Potassium-binding and translocating subunit C</fullName>
    </alternativeName>
    <alternativeName>
        <fullName evidence="1">Potassium-translocating ATPase C chain</fullName>
    </alternativeName>
</protein>
<evidence type="ECO:0000255" key="1">
    <source>
        <dbReference type="HAMAP-Rule" id="MF_00276"/>
    </source>
</evidence>
<keyword id="KW-0067">ATP-binding</keyword>
<keyword id="KW-0997">Cell inner membrane</keyword>
<keyword id="KW-1003">Cell membrane</keyword>
<keyword id="KW-0406">Ion transport</keyword>
<keyword id="KW-0472">Membrane</keyword>
<keyword id="KW-0547">Nucleotide-binding</keyword>
<keyword id="KW-0630">Potassium</keyword>
<keyword id="KW-0633">Potassium transport</keyword>
<keyword id="KW-0812">Transmembrane</keyword>
<keyword id="KW-1133">Transmembrane helix</keyword>
<keyword id="KW-0813">Transport</keyword>
<accession>Q5LHU5</accession>